<comment type="function">
    <text evidence="1">This protein is located at the 30S-50S ribosomal subunit interface and may play a role in the structure and function of the aminoacyl-tRNA binding site.</text>
</comment>
<comment type="similarity">
    <text evidence="1">Belongs to the bacterial ribosomal protein bL19 family.</text>
</comment>
<accession>B7MIU4</accession>
<protein>
    <recommendedName>
        <fullName evidence="1">Large ribosomal subunit protein bL19</fullName>
    </recommendedName>
    <alternativeName>
        <fullName evidence="2">50S ribosomal protein L19</fullName>
    </alternativeName>
</protein>
<reference key="1">
    <citation type="journal article" date="2009" name="PLoS Genet.">
        <title>Organised genome dynamics in the Escherichia coli species results in highly diverse adaptive paths.</title>
        <authorList>
            <person name="Touchon M."/>
            <person name="Hoede C."/>
            <person name="Tenaillon O."/>
            <person name="Barbe V."/>
            <person name="Baeriswyl S."/>
            <person name="Bidet P."/>
            <person name="Bingen E."/>
            <person name="Bonacorsi S."/>
            <person name="Bouchier C."/>
            <person name="Bouvet O."/>
            <person name="Calteau A."/>
            <person name="Chiapello H."/>
            <person name="Clermont O."/>
            <person name="Cruveiller S."/>
            <person name="Danchin A."/>
            <person name="Diard M."/>
            <person name="Dossat C."/>
            <person name="Karoui M.E."/>
            <person name="Frapy E."/>
            <person name="Garry L."/>
            <person name="Ghigo J.M."/>
            <person name="Gilles A.M."/>
            <person name="Johnson J."/>
            <person name="Le Bouguenec C."/>
            <person name="Lescat M."/>
            <person name="Mangenot S."/>
            <person name="Martinez-Jehanne V."/>
            <person name="Matic I."/>
            <person name="Nassif X."/>
            <person name="Oztas S."/>
            <person name="Petit M.A."/>
            <person name="Pichon C."/>
            <person name="Rouy Z."/>
            <person name="Ruf C.S."/>
            <person name="Schneider D."/>
            <person name="Tourret J."/>
            <person name="Vacherie B."/>
            <person name="Vallenet D."/>
            <person name="Medigue C."/>
            <person name="Rocha E.P.C."/>
            <person name="Denamur E."/>
        </authorList>
    </citation>
    <scope>NUCLEOTIDE SEQUENCE [LARGE SCALE GENOMIC DNA]</scope>
    <source>
        <strain>S88 / ExPEC</strain>
    </source>
</reference>
<proteinExistence type="inferred from homology"/>
<name>RL19_ECO45</name>
<sequence>MSNIIKQLEQEQMKQDVPSFRPGDTVEVKVWVVEGSKKRLQAFEGVVIAIRNRGLHSAFTVRKISNGEGVERVFQTHSPVVDSISVKRRGAVRKAKLYYLRERTGKAARIKERLN</sequence>
<feature type="chain" id="PRO_1000193836" description="Large ribosomal subunit protein bL19">
    <location>
        <begin position="1"/>
        <end position="115"/>
    </location>
</feature>
<keyword id="KW-1185">Reference proteome</keyword>
<keyword id="KW-0687">Ribonucleoprotein</keyword>
<keyword id="KW-0689">Ribosomal protein</keyword>
<dbReference type="EMBL" id="CU928161">
    <property type="protein sequence ID" value="CAR04046.1"/>
    <property type="molecule type" value="Genomic_DNA"/>
</dbReference>
<dbReference type="RefSeq" id="WP_000065253.1">
    <property type="nucleotide sequence ID" value="NC_011742.1"/>
</dbReference>
<dbReference type="EMDB" id="EMD-7970"/>
<dbReference type="EMDB" id="EMD-8826"/>
<dbReference type="EMDB" id="EMD-8829"/>
<dbReference type="SMR" id="B7MIU4"/>
<dbReference type="IntAct" id="B7MIU4">
    <property type="interactions" value="1"/>
</dbReference>
<dbReference type="GeneID" id="93774456"/>
<dbReference type="KEGG" id="ecz:ECS88_2792"/>
<dbReference type="HOGENOM" id="CLU_103507_2_1_6"/>
<dbReference type="Proteomes" id="UP000000747">
    <property type="component" value="Chromosome"/>
</dbReference>
<dbReference type="GO" id="GO:0022625">
    <property type="term" value="C:cytosolic large ribosomal subunit"/>
    <property type="evidence" value="ECO:0007669"/>
    <property type="project" value="TreeGrafter"/>
</dbReference>
<dbReference type="GO" id="GO:0003735">
    <property type="term" value="F:structural constituent of ribosome"/>
    <property type="evidence" value="ECO:0007669"/>
    <property type="project" value="InterPro"/>
</dbReference>
<dbReference type="GO" id="GO:0006412">
    <property type="term" value="P:translation"/>
    <property type="evidence" value="ECO:0007669"/>
    <property type="project" value="UniProtKB-UniRule"/>
</dbReference>
<dbReference type="FunFam" id="2.30.30.790:FF:000001">
    <property type="entry name" value="50S ribosomal protein L19"/>
    <property type="match status" value="1"/>
</dbReference>
<dbReference type="Gene3D" id="2.30.30.790">
    <property type="match status" value="1"/>
</dbReference>
<dbReference type="HAMAP" id="MF_00402">
    <property type="entry name" value="Ribosomal_bL19"/>
    <property type="match status" value="1"/>
</dbReference>
<dbReference type="InterPro" id="IPR001857">
    <property type="entry name" value="Ribosomal_bL19"/>
</dbReference>
<dbReference type="InterPro" id="IPR018257">
    <property type="entry name" value="Ribosomal_bL19_CS"/>
</dbReference>
<dbReference type="InterPro" id="IPR038657">
    <property type="entry name" value="Ribosomal_bL19_sf"/>
</dbReference>
<dbReference type="InterPro" id="IPR008991">
    <property type="entry name" value="Translation_prot_SH3-like_sf"/>
</dbReference>
<dbReference type="NCBIfam" id="TIGR01024">
    <property type="entry name" value="rplS_bact"/>
    <property type="match status" value="1"/>
</dbReference>
<dbReference type="PANTHER" id="PTHR15680:SF9">
    <property type="entry name" value="LARGE RIBOSOMAL SUBUNIT PROTEIN BL19M"/>
    <property type="match status" value="1"/>
</dbReference>
<dbReference type="PANTHER" id="PTHR15680">
    <property type="entry name" value="RIBOSOMAL PROTEIN L19"/>
    <property type="match status" value="1"/>
</dbReference>
<dbReference type="Pfam" id="PF01245">
    <property type="entry name" value="Ribosomal_L19"/>
    <property type="match status" value="1"/>
</dbReference>
<dbReference type="PIRSF" id="PIRSF002191">
    <property type="entry name" value="Ribosomal_L19"/>
    <property type="match status" value="1"/>
</dbReference>
<dbReference type="PRINTS" id="PR00061">
    <property type="entry name" value="RIBOSOMALL19"/>
</dbReference>
<dbReference type="SUPFAM" id="SSF50104">
    <property type="entry name" value="Translation proteins SH3-like domain"/>
    <property type="match status" value="1"/>
</dbReference>
<dbReference type="PROSITE" id="PS01015">
    <property type="entry name" value="RIBOSOMAL_L19"/>
    <property type="match status" value="1"/>
</dbReference>
<organism>
    <name type="scientific">Escherichia coli O45:K1 (strain S88 / ExPEC)</name>
    <dbReference type="NCBI Taxonomy" id="585035"/>
    <lineage>
        <taxon>Bacteria</taxon>
        <taxon>Pseudomonadati</taxon>
        <taxon>Pseudomonadota</taxon>
        <taxon>Gammaproteobacteria</taxon>
        <taxon>Enterobacterales</taxon>
        <taxon>Enterobacteriaceae</taxon>
        <taxon>Escherichia</taxon>
    </lineage>
</organism>
<gene>
    <name evidence="1" type="primary">rplS</name>
    <name type="ordered locus">ECS88_2792</name>
</gene>
<evidence type="ECO:0000255" key="1">
    <source>
        <dbReference type="HAMAP-Rule" id="MF_00402"/>
    </source>
</evidence>
<evidence type="ECO:0000305" key="2"/>